<accession>B2J2X2</accession>
<sequence length="96" mass="11161">MIELLEKLFSRGPDSSRTQVKRRLQLVIAHDRADLDPQTLEKMRKEILDVVCRYVEIETEGLEFSLESNQRTTALIANLPIRRVKGAIPEWERGDK</sequence>
<keyword id="KW-0131">Cell cycle</keyword>
<keyword id="KW-0132">Cell division</keyword>
<keyword id="KW-1185">Reference proteome</keyword>
<feature type="chain" id="PRO_1000191292" description="Cell division topological specificity factor">
    <location>
        <begin position="1"/>
        <end position="96"/>
    </location>
</feature>
<evidence type="ECO:0000255" key="1">
    <source>
        <dbReference type="HAMAP-Rule" id="MF_00262"/>
    </source>
</evidence>
<name>MINE_NOSP7</name>
<dbReference type="EMBL" id="CP001037">
    <property type="protein sequence ID" value="ACC82039.1"/>
    <property type="molecule type" value="Genomic_DNA"/>
</dbReference>
<dbReference type="RefSeq" id="WP_012410010.1">
    <property type="nucleotide sequence ID" value="NC_010628.1"/>
</dbReference>
<dbReference type="SMR" id="B2J2X2"/>
<dbReference type="STRING" id="63737.Npun_F3649"/>
<dbReference type="EnsemblBacteria" id="ACC82039">
    <property type="protein sequence ID" value="ACC82039"/>
    <property type="gene ID" value="Npun_F3649"/>
</dbReference>
<dbReference type="KEGG" id="npu:Npun_F3649"/>
<dbReference type="eggNOG" id="COG0851">
    <property type="taxonomic scope" value="Bacteria"/>
</dbReference>
<dbReference type="HOGENOM" id="CLU_137929_1_1_3"/>
<dbReference type="OrthoDB" id="9796578at2"/>
<dbReference type="PhylomeDB" id="B2J2X2"/>
<dbReference type="Proteomes" id="UP000001191">
    <property type="component" value="Chromosome"/>
</dbReference>
<dbReference type="GO" id="GO:0051301">
    <property type="term" value="P:cell division"/>
    <property type="evidence" value="ECO:0007669"/>
    <property type="project" value="UniProtKB-KW"/>
</dbReference>
<dbReference type="GO" id="GO:0032955">
    <property type="term" value="P:regulation of division septum assembly"/>
    <property type="evidence" value="ECO:0007669"/>
    <property type="project" value="InterPro"/>
</dbReference>
<dbReference type="Gene3D" id="3.30.1070.10">
    <property type="entry name" value="Cell division topological specificity factor MinE"/>
    <property type="match status" value="1"/>
</dbReference>
<dbReference type="HAMAP" id="MF_00262">
    <property type="entry name" value="MinE"/>
    <property type="match status" value="1"/>
</dbReference>
<dbReference type="InterPro" id="IPR005527">
    <property type="entry name" value="MinE"/>
</dbReference>
<dbReference type="InterPro" id="IPR036707">
    <property type="entry name" value="MinE_sf"/>
</dbReference>
<dbReference type="NCBIfam" id="TIGR01215">
    <property type="entry name" value="minE"/>
    <property type="match status" value="1"/>
</dbReference>
<dbReference type="Pfam" id="PF03776">
    <property type="entry name" value="MinE"/>
    <property type="match status" value="1"/>
</dbReference>
<dbReference type="SUPFAM" id="SSF55229">
    <property type="entry name" value="Cell division protein MinE topological specificity domain"/>
    <property type="match status" value="1"/>
</dbReference>
<proteinExistence type="inferred from homology"/>
<organism>
    <name type="scientific">Nostoc punctiforme (strain ATCC 29133 / PCC 73102)</name>
    <dbReference type="NCBI Taxonomy" id="63737"/>
    <lineage>
        <taxon>Bacteria</taxon>
        <taxon>Bacillati</taxon>
        <taxon>Cyanobacteriota</taxon>
        <taxon>Cyanophyceae</taxon>
        <taxon>Nostocales</taxon>
        <taxon>Nostocaceae</taxon>
        <taxon>Nostoc</taxon>
    </lineage>
</organism>
<comment type="function">
    <text evidence="1">Prevents the cell division inhibition by proteins MinC and MinD at internal division sites while permitting inhibition at polar sites. This ensures cell division at the proper site by restricting the formation of a division septum at the midpoint of the long axis of the cell.</text>
</comment>
<comment type="similarity">
    <text evidence="1">Belongs to the MinE family.</text>
</comment>
<protein>
    <recommendedName>
        <fullName evidence="1">Cell division topological specificity factor</fullName>
    </recommendedName>
</protein>
<gene>
    <name evidence="1" type="primary">minE</name>
    <name type="ordered locus">Npun_F3649</name>
</gene>
<reference key="1">
    <citation type="journal article" date="2013" name="Plant Physiol.">
        <title>A Nostoc punctiforme Sugar Transporter Necessary to Establish a Cyanobacterium-Plant Symbiosis.</title>
        <authorList>
            <person name="Ekman M."/>
            <person name="Picossi S."/>
            <person name="Campbell E.L."/>
            <person name="Meeks J.C."/>
            <person name="Flores E."/>
        </authorList>
    </citation>
    <scope>NUCLEOTIDE SEQUENCE [LARGE SCALE GENOMIC DNA]</scope>
    <source>
        <strain>ATCC 29133 / PCC 73102</strain>
    </source>
</reference>